<dbReference type="EC" id="4.99.1.9" evidence="1"/>
<dbReference type="EMBL" id="AE016879">
    <property type="protein sequence ID" value="AAP25126.1"/>
    <property type="molecule type" value="Genomic_DNA"/>
</dbReference>
<dbReference type="EMBL" id="AE017334">
    <property type="protein sequence ID" value="AAT30249.1"/>
    <property type="molecule type" value="Genomic_DNA"/>
</dbReference>
<dbReference type="EMBL" id="AE017225">
    <property type="protein sequence ID" value="AAT53398.1"/>
    <property type="molecule type" value="Genomic_DNA"/>
</dbReference>
<dbReference type="RefSeq" id="NP_843640.1">
    <property type="nucleotide sequence ID" value="NC_003997.3"/>
</dbReference>
<dbReference type="RefSeq" id="YP_027347.1">
    <property type="nucleotide sequence ID" value="NC_005945.1"/>
</dbReference>
<dbReference type="SMR" id="Q81TU9"/>
<dbReference type="IntAct" id="Q81TU9">
    <property type="interactions" value="2"/>
</dbReference>
<dbReference type="STRING" id="261594.GBAA_1158"/>
<dbReference type="DNASU" id="1084775"/>
<dbReference type="GeneID" id="45021172"/>
<dbReference type="KEGG" id="ban:BA_1158"/>
<dbReference type="KEGG" id="banh:HYU01_06005"/>
<dbReference type="KEGG" id="bar:GBAA_1158"/>
<dbReference type="KEGG" id="bat:BAS1075"/>
<dbReference type="PATRIC" id="fig|198094.11.peg.1138"/>
<dbReference type="eggNOG" id="COG0276">
    <property type="taxonomic scope" value="Bacteria"/>
</dbReference>
<dbReference type="HOGENOM" id="CLU_018884_2_1_9"/>
<dbReference type="OMA" id="WLEPDIC"/>
<dbReference type="OrthoDB" id="9776380at2"/>
<dbReference type="UniPathway" id="UPA00252"/>
<dbReference type="Proteomes" id="UP000000427">
    <property type="component" value="Chromosome"/>
</dbReference>
<dbReference type="Proteomes" id="UP000000594">
    <property type="component" value="Chromosome"/>
</dbReference>
<dbReference type="GO" id="GO:0005737">
    <property type="term" value="C:cytoplasm"/>
    <property type="evidence" value="ECO:0007669"/>
    <property type="project" value="UniProtKB-SubCell"/>
</dbReference>
<dbReference type="GO" id="GO:0004325">
    <property type="term" value="F:ferrochelatase activity"/>
    <property type="evidence" value="ECO:0007669"/>
    <property type="project" value="UniProtKB-UniRule"/>
</dbReference>
<dbReference type="GO" id="GO:0046872">
    <property type="term" value="F:metal ion binding"/>
    <property type="evidence" value="ECO:0007669"/>
    <property type="project" value="UniProtKB-KW"/>
</dbReference>
<dbReference type="GO" id="GO:0006783">
    <property type="term" value="P:heme biosynthetic process"/>
    <property type="evidence" value="ECO:0007669"/>
    <property type="project" value="UniProtKB-UniRule"/>
</dbReference>
<dbReference type="CDD" id="cd00419">
    <property type="entry name" value="Ferrochelatase_C"/>
    <property type="match status" value="1"/>
</dbReference>
<dbReference type="CDD" id="cd03411">
    <property type="entry name" value="Ferrochelatase_N"/>
    <property type="match status" value="1"/>
</dbReference>
<dbReference type="FunFam" id="3.40.50.1400:FF:000009">
    <property type="entry name" value="Ferrochelatase"/>
    <property type="match status" value="1"/>
</dbReference>
<dbReference type="Gene3D" id="3.40.50.1400">
    <property type="match status" value="2"/>
</dbReference>
<dbReference type="HAMAP" id="MF_00323">
    <property type="entry name" value="Ferrochelatase"/>
    <property type="match status" value="1"/>
</dbReference>
<dbReference type="InterPro" id="IPR001015">
    <property type="entry name" value="Ferrochelatase"/>
</dbReference>
<dbReference type="InterPro" id="IPR019772">
    <property type="entry name" value="Ferrochelatase_AS"/>
</dbReference>
<dbReference type="InterPro" id="IPR033644">
    <property type="entry name" value="Ferrochelatase_C"/>
</dbReference>
<dbReference type="InterPro" id="IPR033659">
    <property type="entry name" value="Ferrochelatase_N"/>
</dbReference>
<dbReference type="NCBIfam" id="TIGR00109">
    <property type="entry name" value="hemH"/>
    <property type="match status" value="1"/>
</dbReference>
<dbReference type="NCBIfam" id="NF009095">
    <property type="entry name" value="PRK12435.1"/>
    <property type="match status" value="1"/>
</dbReference>
<dbReference type="PANTHER" id="PTHR11108">
    <property type="entry name" value="FERROCHELATASE"/>
    <property type="match status" value="1"/>
</dbReference>
<dbReference type="PANTHER" id="PTHR11108:SF1">
    <property type="entry name" value="FERROCHELATASE, MITOCHONDRIAL"/>
    <property type="match status" value="1"/>
</dbReference>
<dbReference type="Pfam" id="PF00762">
    <property type="entry name" value="Ferrochelatase"/>
    <property type="match status" value="1"/>
</dbReference>
<dbReference type="SUPFAM" id="SSF53800">
    <property type="entry name" value="Chelatase"/>
    <property type="match status" value="1"/>
</dbReference>
<dbReference type="PROSITE" id="PS00534">
    <property type="entry name" value="FERROCHELATASE"/>
    <property type="match status" value="1"/>
</dbReference>
<protein>
    <recommendedName>
        <fullName evidence="1">Coproporphyrin III ferrochelatase 2</fullName>
        <ecNumber evidence="1">4.99.1.9</ecNumber>
    </recommendedName>
</protein>
<organism>
    <name type="scientific">Bacillus anthracis</name>
    <dbReference type="NCBI Taxonomy" id="1392"/>
    <lineage>
        <taxon>Bacteria</taxon>
        <taxon>Bacillati</taxon>
        <taxon>Bacillota</taxon>
        <taxon>Bacilli</taxon>
        <taxon>Bacillales</taxon>
        <taxon>Bacillaceae</taxon>
        <taxon>Bacillus</taxon>
        <taxon>Bacillus cereus group</taxon>
    </lineage>
</organism>
<reference key="1">
    <citation type="journal article" date="2003" name="Nature">
        <title>The genome sequence of Bacillus anthracis Ames and comparison to closely related bacteria.</title>
        <authorList>
            <person name="Read T.D."/>
            <person name="Peterson S.N."/>
            <person name="Tourasse N.J."/>
            <person name="Baillie L.W."/>
            <person name="Paulsen I.T."/>
            <person name="Nelson K.E."/>
            <person name="Tettelin H."/>
            <person name="Fouts D.E."/>
            <person name="Eisen J.A."/>
            <person name="Gill S.R."/>
            <person name="Holtzapple E.K."/>
            <person name="Okstad O.A."/>
            <person name="Helgason E."/>
            <person name="Rilstone J."/>
            <person name="Wu M."/>
            <person name="Kolonay J.F."/>
            <person name="Beanan M.J."/>
            <person name="Dodson R.J."/>
            <person name="Brinkac L.M."/>
            <person name="Gwinn M.L."/>
            <person name="DeBoy R.T."/>
            <person name="Madpu R."/>
            <person name="Daugherty S.C."/>
            <person name="Durkin A.S."/>
            <person name="Haft D.H."/>
            <person name="Nelson W.C."/>
            <person name="Peterson J.D."/>
            <person name="Pop M."/>
            <person name="Khouri H.M."/>
            <person name="Radune D."/>
            <person name="Benton J.L."/>
            <person name="Mahamoud Y."/>
            <person name="Jiang L."/>
            <person name="Hance I.R."/>
            <person name="Weidman J.F."/>
            <person name="Berry K.J."/>
            <person name="Plaut R.D."/>
            <person name="Wolf A.M."/>
            <person name="Watkins K.L."/>
            <person name="Nierman W.C."/>
            <person name="Hazen A."/>
            <person name="Cline R.T."/>
            <person name="Redmond C."/>
            <person name="Thwaite J.E."/>
            <person name="White O."/>
            <person name="Salzberg S.L."/>
            <person name="Thomason B."/>
            <person name="Friedlander A.M."/>
            <person name="Koehler T.M."/>
            <person name="Hanna P.C."/>
            <person name="Kolstoe A.-B."/>
            <person name="Fraser C.M."/>
        </authorList>
    </citation>
    <scope>NUCLEOTIDE SEQUENCE [LARGE SCALE GENOMIC DNA]</scope>
    <source>
        <strain>Ames / isolate Porton</strain>
    </source>
</reference>
<reference key="2">
    <citation type="journal article" date="2009" name="J. Bacteriol.">
        <title>The complete genome sequence of Bacillus anthracis Ames 'Ancestor'.</title>
        <authorList>
            <person name="Ravel J."/>
            <person name="Jiang L."/>
            <person name="Stanley S.T."/>
            <person name="Wilson M.R."/>
            <person name="Decker R.S."/>
            <person name="Read T.D."/>
            <person name="Worsham P."/>
            <person name="Keim P.S."/>
            <person name="Salzberg S.L."/>
            <person name="Fraser-Liggett C.M."/>
            <person name="Rasko D.A."/>
        </authorList>
    </citation>
    <scope>NUCLEOTIDE SEQUENCE [LARGE SCALE GENOMIC DNA]</scope>
    <source>
        <strain>Ames ancestor</strain>
    </source>
</reference>
<reference key="3">
    <citation type="submission" date="2004-01" db="EMBL/GenBank/DDBJ databases">
        <title>Complete genome sequence of Bacillus anthracis Sterne.</title>
        <authorList>
            <person name="Brettin T.S."/>
            <person name="Bruce D."/>
            <person name="Challacombe J.F."/>
            <person name="Gilna P."/>
            <person name="Han C."/>
            <person name="Hill K."/>
            <person name="Hitchcock P."/>
            <person name="Jackson P."/>
            <person name="Keim P."/>
            <person name="Longmire J."/>
            <person name="Lucas S."/>
            <person name="Okinaka R."/>
            <person name="Richardson P."/>
            <person name="Rubin E."/>
            <person name="Tice H."/>
        </authorList>
    </citation>
    <scope>NUCLEOTIDE SEQUENCE [LARGE SCALE GENOMIC DNA]</scope>
    <source>
        <strain>Sterne</strain>
    </source>
</reference>
<sequence length="319" mass="36366">MKKKKIGLLVMAYGTPDSLDEVEAYYTHIRHGRKPSEEALQDLIGRYKAIGGISPLAKITKEQAHKLTDSMNNMFTEYEFNCYLGLKHTAPFIEDAVEEMKRDGIEQAISIVLAPHYSTFSIKAYNERAIRLSEEIGGPVIKPIDQWYDEPKFISYWADQIKETFTKIEDKEKAVVIFSAHSLPEKIIAAGDPYVEQLQHTADLIAAAANIQNYTIGWQSAGNTPDPWIGPDVQDLTRDLFEEYRYESFIYCPVGFVAEHLEVLYDNDYECKVVTDELNAAYFRPNMPNAQSTFIDCLATIVSRKMKEIVDKELILNNN</sequence>
<accession>Q81TU9</accession>
<accession>Q6I233</accession>
<accession>Q6KVW9</accession>
<gene>
    <name evidence="1" type="primary">cpfC2</name>
    <name type="synonym">hemH-2</name>
    <name type="synonym">hemH2</name>
    <name type="ordered locus">BA_1158</name>
    <name type="ordered locus">GBAA_1158</name>
    <name type="ordered locus">BAS1075</name>
</gene>
<feature type="chain" id="PRO_0000175103" description="Coproporphyrin III ferrochelatase 2">
    <location>
        <begin position="1"/>
        <end position="319"/>
    </location>
</feature>
<feature type="binding site" description="axial binding residue" evidence="1">
    <location>
        <position position="13"/>
    </location>
    <ligand>
        <name>Fe-coproporphyrin III</name>
        <dbReference type="ChEBI" id="CHEBI:68438"/>
    </ligand>
    <ligandPart>
        <name>Fe</name>
        <dbReference type="ChEBI" id="CHEBI:18248"/>
    </ligandPart>
</feature>
<feature type="binding site" evidence="1">
    <location>
        <position position="30"/>
    </location>
    <ligand>
        <name>Fe-coproporphyrin III</name>
        <dbReference type="ChEBI" id="CHEBI:68438"/>
    </ligand>
</feature>
<feature type="binding site" evidence="1">
    <location>
        <begin position="46"/>
        <end position="47"/>
    </location>
    <ligand>
        <name>Fe-coproporphyrin III</name>
        <dbReference type="ChEBI" id="CHEBI:68438"/>
    </ligand>
</feature>
<feature type="binding site" evidence="1">
    <location>
        <position position="54"/>
    </location>
    <ligand>
        <name>Fe-coproporphyrin III</name>
        <dbReference type="ChEBI" id="CHEBI:68438"/>
    </ligand>
</feature>
<feature type="binding site" evidence="1">
    <location>
        <position position="125"/>
    </location>
    <ligand>
        <name>Fe-coproporphyrin III</name>
        <dbReference type="ChEBI" id="CHEBI:68438"/>
    </ligand>
</feature>
<feature type="binding site" evidence="1">
    <location>
        <position position="181"/>
    </location>
    <ligand>
        <name>Fe(2+)</name>
        <dbReference type="ChEBI" id="CHEBI:29033"/>
    </ligand>
</feature>
<feature type="binding site" evidence="1">
    <location>
        <position position="262"/>
    </location>
    <ligand>
        <name>Fe(2+)</name>
        <dbReference type="ChEBI" id="CHEBI:29033"/>
    </ligand>
</feature>
<comment type="function">
    <text evidence="1">Involved in coproporphyrin-dependent heme b biosynthesis. Catalyzes the insertion of ferrous iron into coproporphyrin III to form Fe-coproporphyrin III.</text>
</comment>
<comment type="catalytic activity">
    <reaction evidence="1">
        <text>Fe-coproporphyrin III + 2 H(+) = coproporphyrin III + Fe(2+)</text>
        <dbReference type="Rhea" id="RHEA:49572"/>
        <dbReference type="ChEBI" id="CHEBI:15378"/>
        <dbReference type="ChEBI" id="CHEBI:29033"/>
        <dbReference type="ChEBI" id="CHEBI:68438"/>
        <dbReference type="ChEBI" id="CHEBI:131725"/>
        <dbReference type="EC" id="4.99.1.9"/>
    </reaction>
    <physiologicalReaction direction="right-to-left" evidence="1">
        <dbReference type="Rhea" id="RHEA:49574"/>
    </physiologicalReaction>
</comment>
<comment type="pathway">
    <text evidence="1">Porphyrin-containing compound metabolism; protoheme biosynthesis.</text>
</comment>
<comment type="subcellular location">
    <subcellularLocation>
        <location evidence="1">Cytoplasm</location>
    </subcellularLocation>
</comment>
<comment type="similarity">
    <text evidence="1 2">Belongs to the ferrochelatase family.</text>
</comment>
<proteinExistence type="inferred from homology"/>
<evidence type="ECO:0000255" key="1">
    <source>
        <dbReference type="HAMAP-Rule" id="MF_00323"/>
    </source>
</evidence>
<evidence type="ECO:0000305" key="2"/>
<keyword id="KW-0963">Cytoplasm</keyword>
<keyword id="KW-0350">Heme biosynthesis</keyword>
<keyword id="KW-0408">Iron</keyword>
<keyword id="KW-0456">Lyase</keyword>
<keyword id="KW-0479">Metal-binding</keyword>
<keyword id="KW-0627">Porphyrin biosynthesis</keyword>
<keyword id="KW-1185">Reference proteome</keyword>
<name>CPFC2_BACAN</name>